<comment type="function">
    <text evidence="1">Plays an essential role in the initiation and regulation of chromosomal replication. ATP-DnaA binds to the origin of replication (oriC) to initiate formation of the DNA replication initiation complex once per cell cycle. Binds the DnaA box (a 9 base pair repeat at the origin) and separates the double-stranded (ds)DNA. Forms a right-handed helical filament on oriC DNA; dsDNA binds to the exterior of the filament while single-stranded (ss)DNA is stabiized in the filament's interior. The ATP-DnaA-oriC complex binds and stabilizes one strand of the AT-rich DNA unwinding element (DUE), permitting loading of DNA polymerase. After initiation quickly degrades to an ADP-DnaA complex that is not apt for DNA replication. Binds acidic phospholipids.</text>
</comment>
<comment type="subunit">
    <text evidence="1">Oligomerizes as a right-handed, spiral filament on DNA at oriC.</text>
</comment>
<comment type="subcellular location">
    <subcellularLocation>
        <location evidence="1">Cytoplasm</location>
    </subcellularLocation>
    <subcellularLocation>
        <location evidence="2">Cell membrane</location>
    </subcellularLocation>
    <text evidence="2">Most protein is present in a crude membrane fraction.</text>
</comment>
<comment type="induction">
    <text evidence="2">Transcription is constitutive; transcription is reduced by treatent with DNA damaging agents methylmethane sulfonate (MMS) and mitomycin C (MC). Protein levels remain constant during treatment with MMS, MC and chloramphenicol (at protein level).</text>
</comment>
<comment type="domain">
    <text evidence="1">Domain I is involved in oligomerization and binding regulators, domain II is flexibile and of varying length in different bacteria, domain III forms the AAA+ region, while domain IV binds dsDNA.</text>
</comment>
<comment type="miscellaneous">
    <text evidence="2">Estimated to be present at 2000-3000 molecules per cell.</text>
</comment>
<comment type="similarity">
    <text evidence="1 3">Belongs to the DnaA family.</text>
</comment>
<keyword id="KW-0067">ATP-binding</keyword>
<keyword id="KW-1003">Cell membrane</keyword>
<keyword id="KW-0963">Cytoplasm</keyword>
<keyword id="KW-0235">DNA replication</keyword>
<keyword id="KW-0238">DNA-binding</keyword>
<keyword id="KW-0446">Lipid-binding</keyword>
<keyword id="KW-0472">Membrane</keyword>
<keyword id="KW-0547">Nucleotide-binding</keyword>
<gene>
    <name evidence="1" type="primary">dnaA</name>
    <name type="ordered locus">MCAP_0001</name>
</gene>
<sequence>MNLNDILKELKLSLIANKNIDESVYNDYIKTINIYKKDLSNYVVVVKSQFGLLAIKQFRPTIENEIKKILKQPVNISFTYEQEYQKQLEKTESINKDHSDIISKKNKKVNENTFENFVIGSSNEQAFIAVQTVSKNPGISYNPLFIYGESGMGKTHLLKAAKNYIESNFSDLKVSYMSGDEFARKAVDILQKTHKEIEQFKNEVCQNDVLIIDDVQFLSYKEKTNEIFFTIFNNFIENDKQLFFSSDKSPELLNGFDNRLITRFNMGLSIAIQKLDNKTATAIIKKEIKNQNIKTEVTNEAINFISNYYSDDVRKIKGSVSRLNFWSQQNPEEKVITIEIISDLFRDIPTSKLGILNVKKIKEVVSEKYGISVNAIDGKARSKSIVTARHIAMYLTKEILNHTLAQIGEEFGGRDHTTVINAERKIEMMLKKDKQLKKTVDILKNKILTK</sequence>
<protein>
    <recommendedName>
        <fullName evidence="1">Chromosomal replication initiator protein DnaA</fullName>
    </recommendedName>
</protein>
<organism>
    <name type="scientific">Mycoplasma capricolum subsp. capricolum (strain California kid / ATCC 27343 / NCTC 10154)</name>
    <dbReference type="NCBI Taxonomy" id="340047"/>
    <lineage>
        <taxon>Bacteria</taxon>
        <taxon>Bacillati</taxon>
        <taxon>Mycoplasmatota</taxon>
        <taxon>Mollicutes</taxon>
        <taxon>Mycoplasmataceae</taxon>
        <taxon>Mycoplasma</taxon>
    </lineage>
</organism>
<reference evidence="5" key="1">
    <citation type="journal article" date="1992" name="Gene">
        <title>Structure of the dnaA and DnaA-box region in the Mycoplasma capricolum chromosome: conservation and variations in the course of evolution.</title>
        <authorList>
            <person name="Fujita M.Q."/>
            <person name="Yoshikawa H."/>
            <person name="Ogasawara N."/>
        </authorList>
    </citation>
    <scope>NUCLEOTIDE SEQUENCE [GENOMIC DNA]</scope>
    <source>
        <strain>California kid / ATCC 27343 / NCTC 10154</strain>
    </source>
</reference>
<reference key="2">
    <citation type="journal article" date="1991" name="Mol. Microbiol.">
        <title>Structure and function of DnaA and the DnaA-box in eubacteria: evolutionary relationships of bacterial replication origins.</title>
        <authorList>
            <person name="Yoshikawa H."/>
            <person name="Ogasawara N."/>
        </authorList>
    </citation>
    <scope>NUCLEOTIDE SEQUENCE [GENOMIC DNA]</scope>
</reference>
<reference evidence="4" key="3">
    <citation type="submission" date="2005-09" db="EMBL/GenBank/DDBJ databases">
        <authorList>
            <person name="Glass J.I."/>
            <person name="Lartigue C."/>
            <person name="Pfannkoch C."/>
            <person name="Baden-Tillson H."/>
            <person name="Smith H.O."/>
            <person name="Venter J.C."/>
            <person name="Roske K."/>
            <person name="Wise K.S."/>
            <person name="Calcutt M.J."/>
            <person name="Nelson W.C."/>
            <person name="Nierman W.C."/>
        </authorList>
    </citation>
    <scope>NUCLEOTIDE SEQUENCE [LARGE SCALE GENOMIC DNA]</scope>
    <source>
        <strain>California kid / ATCC 27343 / NCTC 10154</strain>
    </source>
</reference>
<reference evidence="6" key="4">
    <citation type="journal article" date="1997" name="FEMS Microbiol. Lett.">
        <title>Characterization of dnaA gene expression in Mycoplasma capricolum.</title>
        <authorList>
            <person name="Seto S."/>
            <person name="Murata S."/>
            <person name="Miyata M."/>
        </authorList>
    </citation>
    <scope>NUCLEOTIDE SEQUENCE [GENOMIC DNA] OF 1-43</scope>
    <scope>SUBCELLULAR LOCATION</scope>
    <scope>INDUCTION</scope>
    <scope>PROTEIN ABUNDANCE</scope>
    <source>
        <strain>California kid / ATCC 27343 / NCTC 10154</strain>
    </source>
</reference>
<reference evidence="7" key="5">
    <citation type="journal article" date="1995" name="Mol. Microbiol.">
        <title>Exploring the Mycoplasma capricolum genome: a minimal cell reveals its physiology.</title>
        <authorList>
            <person name="Bork P."/>
            <person name="Ouzounis C."/>
            <person name="Casari G."/>
            <person name="Schneider R."/>
            <person name="Sander C."/>
            <person name="Dolan M."/>
            <person name="Gilbert W."/>
            <person name="Gillevet P.M."/>
        </authorList>
    </citation>
    <scope>NUCLEOTIDE SEQUENCE [GENOMIC DNA] OF 181-420</scope>
    <source>
        <strain>California kid / ATCC 27343 / NCTC 10154</strain>
    </source>
</reference>
<accession>P24116</accession>
<accession>Q2STB2</accession>
<accession>Q48990</accession>
<accession>Q9R632</accession>
<feature type="chain" id="PRO_0000114208" description="Chromosomal replication initiator protein DnaA">
    <location>
        <begin position="1"/>
        <end position="450"/>
    </location>
</feature>
<feature type="region of interest" description="Domain I, interacts with DnaA modulators" evidence="1">
    <location>
        <begin position="1"/>
        <end position="76"/>
    </location>
</feature>
<feature type="region of interest" description="Domain II" evidence="1">
    <location>
        <begin position="76"/>
        <end position="107"/>
    </location>
</feature>
<feature type="region of interest" description="Domain III, AAA+ region" evidence="1">
    <location>
        <begin position="108"/>
        <end position="327"/>
    </location>
</feature>
<feature type="region of interest" description="Domain IV, binds dsDNA" evidence="1">
    <location>
        <begin position="328"/>
        <end position="450"/>
    </location>
</feature>
<feature type="binding site" evidence="1">
    <location>
        <position position="151"/>
    </location>
    <ligand>
        <name>ATP</name>
        <dbReference type="ChEBI" id="CHEBI:30616"/>
    </ligand>
</feature>
<feature type="binding site" evidence="1">
    <location>
        <position position="153"/>
    </location>
    <ligand>
        <name>ATP</name>
        <dbReference type="ChEBI" id="CHEBI:30616"/>
    </ligand>
</feature>
<feature type="binding site" evidence="1">
    <location>
        <position position="154"/>
    </location>
    <ligand>
        <name>ATP</name>
        <dbReference type="ChEBI" id="CHEBI:30616"/>
    </ligand>
</feature>
<feature type="binding site" evidence="1">
    <location>
        <position position="155"/>
    </location>
    <ligand>
        <name>ATP</name>
        <dbReference type="ChEBI" id="CHEBI:30616"/>
    </ligand>
</feature>
<feature type="sequence conflict" description="In Ref. 5; CAA83731." evidence="3" ref="5">
    <original>TVI</original>
    <variation>NSY</variation>
    <location>
        <begin position="418"/>
        <end position="420"/>
    </location>
</feature>
<dbReference type="EMBL" id="D90426">
    <property type="protein sequence ID" value="BAA14415.1"/>
    <property type="molecule type" value="Genomic_DNA"/>
</dbReference>
<dbReference type="EMBL" id="CP000123">
    <property type="protein sequence ID" value="ABC01518.1"/>
    <property type="molecule type" value="Genomic_DNA"/>
</dbReference>
<dbReference type="EMBL" id="AB000401">
    <property type="protein sequence ID" value="BAA20470.1"/>
    <property type="molecule type" value="Genomic_DNA"/>
</dbReference>
<dbReference type="EMBL" id="Z33057">
    <property type="protein sequence ID" value="CAA83731.2"/>
    <property type="molecule type" value="Genomic_DNA"/>
</dbReference>
<dbReference type="PIR" id="JN0272">
    <property type="entry name" value="IQYMC"/>
</dbReference>
<dbReference type="RefSeq" id="WP_011386906.1">
    <property type="nucleotide sequence ID" value="NC_007633.1"/>
</dbReference>
<dbReference type="SMR" id="P24116"/>
<dbReference type="GeneID" id="23778213"/>
<dbReference type="KEGG" id="mcp:MCAP_0001"/>
<dbReference type="HOGENOM" id="CLU_026910_3_2_14"/>
<dbReference type="PhylomeDB" id="P24116"/>
<dbReference type="Proteomes" id="UP000001928">
    <property type="component" value="Chromosome"/>
</dbReference>
<dbReference type="GO" id="GO:0005737">
    <property type="term" value="C:cytoplasm"/>
    <property type="evidence" value="ECO:0007669"/>
    <property type="project" value="UniProtKB-SubCell"/>
</dbReference>
<dbReference type="GO" id="GO:0005886">
    <property type="term" value="C:plasma membrane"/>
    <property type="evidence" value="ECO:0007669"/>
    <property type="project" value="UniProtKB-SubCell"/>
</dbReference>
<dbReference type="GO" id="GO:0005524">
    <property type="term" value="F:ATP binding"/>
    <property type="evidence" value="ECO:0007669"/>
    <property type="project" value="UniProtKB-UniRule"/>
</dbReference>
<dbReference type="GO" id="GO:0016887">
    <property type="term" value="F:ATP hydrolysis activity"/>
    <property type="evidence" value="ECO:0007669"/>
    <property type="project" value="InterPro"/>
</dbReference>
<dbReference type="GO" id="GO:0003688">
    <property type="term" value="F:DNA replication origin binding"/>
    <property type="evidence" value="ECO:0007669"/>
    <property type="project" value="UniProtKB-UniRule"/>
</dbReference>
<dbReference type="GO" id="GO:0008289">
    <property type="term" value="F:lipid binding"/>
    <property type="evidence" value="ECO:0007669"/>
    <property type="project" value="UniProtKB-KW"/>
</dbReference>
<dbReference type="GO" id="GO:0006270">
    <property type="term" value="P:DNA replication initiation"/>
    <property type="evidence" value="ECO:0007669"/>
    <property type="project" value="UniProtKB-UniRule"/>
</dbReference>
<dbReference type="GO" id="GO:0006275">
    <property type="term" value="P:regulation of DNA replication"/>
    <property type="evidence" value="ECO:0007669"/>
    <property type="project" value="UniProtKB-UniRule"/>
</dbReference>
<dbReference type="CDD" id="cd00009">
    <property type="entry name" value="AAA"/>
    <property type="match status" value="1"/>
</dbReference>
<dbReference type="CDD" id="cd06571">
    <property type="entry name" value="Bac_DnaA_C"/>
    <property type="match status" value="1"/>
</dbReference>
<dbReference type="Gene3D" id="1.10.1750.10">
    <property type="match status" value="1"/>
</dbReference>
<dbReference type="Gene3D" id="1.10.8.60">
    <property type="match status" value="1"/>
</dbReference>
<dbReference type="Gene3D" id="3.40.50.300">
    <property type="entry name" value="P-loop containing nucleotide triphosphate hydrolases"/>
    <property type="match status" value="1"/>
</dbReference>
<dbReference type="HAMAP" id="MF_00377">
    <property type="entry name" value="DnaA_bact"/>
    <property type="match status" value="1"/>
</dbReference>
<dbReference type="InterPro" id="IPR003593">
    <property type="entry name" value="AAA+_ATPase"/>
</dbReference>
<dbReference type="InterPro" id="IPR001957">
    <property type="entry name" value="Chromosome_initiator_DnaA"/>
</dbReference>
<dbReference type="InterPro" id="IPR020591">
    <property type="entry name" value="Chromosome_initiator_DnaA-like"/>
</dbReference>
<dbReference type="InterPro" id="IPR018312">
    <property type="entry name" value="Chromosome_initiator_DnaA_CS"/>
</dbReference>
<dbReference type="InterPro" id="IPR013159">
    <property type="entry name" value="DnaA_C"/>
</dbReference>
<dbReference type="InterPro" id="IPR013317">
    <property type="entry name" value="DnaA_dom"/>
</dbReference>
<dbReference type="InterPro" id="IPR027417">
    <property type="entry name" value="P-loop_NTPase"/>
</dbReference>
<dbReference type="InterPro" id="IPR010921">
    <property type="entry name" value="Trp_repressor/repl_initiator"/>
</dbReference>
<dbReference type="NCBIfam" id="TIGR00362">
    <property type="entry name" value="DnaA"/>
    <property type="match status" value="1"/>
</dbReference>
<dbReference type="PANTHER" id="PTHR30050">
    <property type="entry name" value="CHROMOSOMAL REPLICATION INITIATOR PROTEIN DNAA"/>
    <property type="match status" value="1"/>
</dbReference>
<dbReference type="PANTHER" id="PTHR30050:SF2">
    <property type="entry name" value="CHROMOSOMAL REPLICATION INITIATOR PROTEIN DNAA"/>
    <property type="match status" value="1"/>
</dbReference>
<dbReference type="Pfam" id="PF00308">
    <property type="entry name" value="Bac_DnaA"/>
    <property type="match status" value="1"/>
</dbReference>
<dbReference type="Pfam" id="PF08299">
    <property type="entry name" value="Bac_DnaA_C"/>
    <property type="match status" value="1"/>
</dbReference>
<dbReference type="PRINTS" id="PR00051">
    <property type="entry name" value="DNAA"/>
</dbReference>
<dbReference type="SMART" id="SM00382">
    <property type="entry name" value="AAA"/>
    <property type="match status" value="1"/>
</dbReference>
<dbReference type="SMART" id="SM00760">
    <property type="entry name" value="Bac_DnaA_C"/>
    <property type="match status" value="1"/>
</dbReference>
<dbReference type="SUPFAM" id="SSF52540">
    <property type="entry name" value="P-loop containing nucleoside triphosphate hydrolases"/>
    <property type="match status" value="1"/>
</dbReference>
<dbReference type="SUPFAM" id="SSF48295">
    <property type="entry name" value="TrpR-like"/>
    <property type="match status" value="1"/>
</dbReference>
<dbReference type="PROSITE" id="PS01008">
    <property type="entry name" value="DNAA"/>
    <property type="match status" value="1"/>
</dbReference>
<evidence type="ECO:0000255" key="1">
    <source>
        <dbReference type="HAMAP-Rule" id="MF_00377"/>
    </source>
</evidence>
<evidence type="ECO:0000269" key="2">
    <source>
    </source>
</evidence>
<evidence type="ECO:0000305" key="3"/>
<evidence type="ECO:0000312" key="4">
    <source>
        <dbReference type="EMBL" id="ABC01518.1"/>
    </source>
</evidence>
<evidence type="ECO:0000312" key="5">
    <source>
        <dbReference type="EMBL" id="BAA14415.1"/>
    </source>
</evidence>
<evidence type="ECO:0000312" key="6">
    <source>
        <dbReference type="EMBL" id="BAA20470.1"/>
    </source>
</evidence>
<evidence type="ECO:0000312" key="7">
    <source>
        <dbReference type="EMBL" id="CAA83731.2"/>
    </source>
</evidence>
<name>DNAA_MYCCT</name>
<proteinExistence type="evidence at protein level"/>